<name>GPDA_BRAHW</name>
<keyword id="KW-0963">Cytoplasm</keyword>
<keyword id="KW-0444">Lipid biosynthesis</keyword>
<keyword id="KW-0443">Lipid metabolism</keyword>
<keyword id="KW-0520">NAD</keyword>
<keyword id="KW-0521">NADP</keyword>
<keyword id="KW-0547">Nucleotide-binding</keyword>
<keyword id="KW-0560">Oxidoreductase</keyword>
<keyword id="KW-0594">Phospholipid biosynthesis</keyword>
<keyword id="KW-1208">Phospholipid metabolism</keyword>
<reference key="1">
    <citation type="journal article" date="2009" name="PLoS ONE">
        <title>Genome sequence of the pathogenic intestinal spirochete Brachyspira hyodysenteriae reveals adaptations to its lifestyle in the porcine large intestine.</title>
        <authorList>
            <person name="Bellgard M.I."/>
            <person name="Wanchanthuek P."/>
            <person name="La T."/>
            <person name="Ryan K."/>
            <person name="Moolhuijzen P."/>
            <person name="Albertyn Z."/>
            <person name="Shaban B."/>
            <person name="Motro Y."/>
            <person name="Dunn D.S."/>
            <person name="Schibeci D."/>
            <person name="Hunter A."/>
            <person name="Barrero R."/>
            <person name="Phillips N.D."/>
            <person name="Hampson D.J."/>
        </authorList>
    </citation>
    <scope>NUCLEOTIDE SEQUENCE [LARGE SCALE GENOMIC DNA]</scope>
    <source>
        <strain>ATCC 49526 / WA1</strain>
    </source>
</reference>
<protein>
    <recommendedName>
        <fullName evidence="1">Glycerol-3-phosphate dehydrogenase [NAD(P)+]</fullName>
        <ecNumber evidence="1">1.1.1.94</ecNumber>
    </recommendedName>
    <alternativeName>
        <fullName evidence="1">NAD(P)(+)-dependent glycerol-3-phosphate dehydrogenase</fullName>
    </alternativeName>
    <alternativeName>
        <fullName evidence="1">NAD(P)H-dependent dihydroxyacetone-phosphate reductase</fullName>
    </alternativeName>
</protein>
<comment type="function">
    <text evidence="1">Catalyzes the reduction of the glycolytic intermediate dihydroxyacetone phosphate (DHAP) to sn-glycerol 3-phosphate (G3P), the key precursor for phospholipid synthesis.</text>
</comment>
<comment type="catalytic activity">
    <reaction evidence="1">
        <text>sn-glycerol 3-phosphate + NAD(+) = dihydroxyacetone phosphate + NADH + H(+)</text>
        <dbReference type="Rhea" id="RHEA:11092"/>
        <dbReference type="ChEBI" id="CHEBI:15378"/>
        <dbReference type="ChEBI" id="CHEBI:57540"/>
        <dbReference type="ChEBI" id="CHEBI:57597"/>
        <dbReference type="ChEBI" id="CHEBI:57642"/>
        <dbReference type="ChEBI" id="CHEBI:57945"/>
        <dbReference type="EC" id="1.1.1.94"/>
    </reaction>
    <physiologicalReaction direction="right-to-left" evidence="1">
        <dbReference type="Rhea" id="RHEA:11094"/>
    </physiologicalReaction>
</comment>
<comment type="catalytic activity">
    <reaction evidence="1">
        <text>sn-glycerol 3-phosphate + NADP(+) = dihydroxyacetone phosphate + NADPH + H(+)</text>
        <dbReference type="Rhea" id="RHEA:11096"/>
        <dbReference type="ChEBI" id="CHEBI:15378"/>
        <dbReference type="ChEBI" id="CHEBI:57597"/>
        <dbReference type="ChEBI" id="CHEBI:57642"/>
        <dbReference type="ChEBI" id="CHEBI:57783"/>
        <dbReference type="ChEBI" id="CHEBI:58349"/>
        <dbReference type="EC" id="1.1.1.94"/>
    </reaction>
    <physiologicalReaction direction="right-to-left" evidence="1">
        <dbReference type="Rhea" id="RHEA:11098"/>
    </physiologicalReaction>
</comment>
<comment type="pathway">
    <text evidence="1">Membrane lipid metabolism; glycerophospholipid metabolism.</text>
</comment>
<comment type="subcellular location">
    <subcellularLocation>
        <location evidence="1">Cytoplasm</location>
    </subcellularLocation>
</comment>
<comment type="similarity">
    <text evidence="1">Belongs to the NAD-dependent glycerol-3-phosphate dehydrogenase family.</text>
</comment>
<proteinExistence type="inferred from homology"/>
<dbReference type="EC" id="1.1.1.94" evidence="1"/>
<dbReference type="EMBL" id="CP001357">
    <property type="protein sequence ID" value="ACN82996.1"/>
    <property type="molecule type" value="Genomic_DNA"/>
</dbReference>
<dbReference type="RefSeq" id="WP_012670047.1">
    <property type="nucleotide sequence ID" value="NC_012225.1"/>
</dbReference>
<dbReference type="SMR" id="C0QYQ8"/>
<dbReference type="STRING" id="565034.BHWA1_00500"/>
<dbReference type="GeneID" id="63961591"/>
<dbReference type="KEGG" id="bhy:BHWA1_00500"/>
<dbReference type="eggNOG" id="COG0240">
    <property type="taxonomic scope" value="Bacteria"/>
</dbReference>
<dbReference type="HOGENOM" id="CLU_033449_0_2_12"/>
<dbReference type="UniPathway" id="UPA00940"/>
<dbReference type="Proteomes" id="UP000001803">
    <property type="component" value="Chromosome"/>
</dbReference>
<dbReference type="GO" id="GO:0005829">
    <property type="term" value="C:cytosol"/>
    <property type="evidence" value="ECO:0007669"/>
    <property type="project" value="TreeGrafter"/>
</dbReference>
<dbReference type="GO" id="GO:0047952">
    <property type="term" value="F:glycerol-3-phosphate dehydrogenase [NAD(P)+] activity"/>
    <property type="evidence" value="ECO:0007669"/>
    <property type="project" value="UniProtKB-UniRule"/>
</dbReference>
<dbReference type="GO" id="GO:0051287">
    <property type="term" value="F:NAD binding"/>
    <property type="evidence" value="ECO:0007669"/>
    <property type="project" value="InterPro"/>
</dbReference>
<dbReference type="GO" id="GO:0005975">
    <property type="term" value="P:carbohydrate metabolic process"/>
    <property type="evidence" value="ECO:0007669"/>
    <property type="project" value="InterPro"/>
</dbReference>
<dbReference type="GO" id="GO:0046167">
    <property type="term" value="P:glycerol-3-phosphate biosynthetic process"/>
    <property type="evidence" value="ECO:0007669"/>
    <property type="project" value="UniProtKB-UniRule"/>
</dbReference>
<dbReference type="GO" id="GO:0046168">
    <property type="term" value="P:glycerol-3-phosphate catabolic process"/>
    <property type="evidence" value="ECO:0007669"/>
    <property type="project" value="InterPro"/>
</dbReference>
<dbReference type="GO" id="GO:0006650">
    <property type="term" value="P:glycerophospholipid metabolic process"/>
    <property type="evidence" value="ECO:0007669"/>
    <property type="project" value="UniProtKB-UniRule"/>
</dbReference>
<dbReference type="GO" id="GO:0008654">
    <property type="term" value="P:phospholipid biosynthetic process"/>
    <property type="evidence" value="ECO:0007669"/>
    <property type="project" value="UniProtKB-KW"/>
</dbReference>
<dbReference type="FunFam" id="1.10.1040.10:FF:000001">
    <property type="entry name" value="Glycerol-3-phosphate dehydrogenase [NAD(P)+]"/>
    <property type="match status" value="1"/>
</dbReference>
<dbReference type="FunFam" id="3.40.50.720:FF:000019">
    <property type="entry name" value="Glycerol-3-phosphate dehydrogenase [NAD(P)+]"/>
    <property type="match status" value="1"/>
</dbReference>
<dbReference type="Gene3D" id="1.10.1040.10">
    <property type="entry name" value="N-(1-d-carboxylethyl)-l-norvaline Dehydrogenase, domain 2"/>
    <property type="match status" value="1"/>
</dbReference>
<dbReference type="Gene3D" id="3.40.50.720">
    <property type="entry name" value="NAD(P)-binding Rossmann-like Domain"/>
    <property type="match status" value="1"/>
</dbReference>
<dbReference type="HAMAP" id="MF_00394">
    <property type="entry name" value="NAD_Glyc3P_dehydrog"/>
    <property type="match status" value="1"/>
</dbReference>
<dbReference type="InterPro" id="IPR008927">
    <property type="entry name" value="6-PGluconate_DH-like_C_sf"/>
</dbReference>
<dbReference type="InterPro" id="IPR013328">
    <property type="entry name" value="6PGD_dom2"/>
</dbReference>
<dbReference type="InterPro" id="IPR006168">
    <property type="entry name" value="G3P_DH_NAD-dep"/>
</dbReference>
<dbReference type="InterPro" id="IPR006109">
    <property type="entry name" value="G3P_DH_NAD-dep_C"/>
</dbReference>
<dbReference type="InterPro" id="IPR011128">
    <property type="entry name" value="G3P_DH_NAD-dep_N"/>
</dbReference>
<dbReference type="InterPro" id="IPR036291">
    <property type="entry name" value="NAD(P)-bd_dom_sf"/>
</dbReference>
<dbReference type="NCBIfam" id="NF000940">
    <property type="entry name" value="PRK00094.1-2"/>
    <property type="match status" value="1"/>
</dbReference>
<dbReference type="NCBIfam" id="NF000942">
    <property type="entry name" value="PRK00094.1-4"/>
    <property type="match status" value="1"/>
</dbReference>
<dbReference type="PANTHER" id="PTHR11728">
    <property type="entry name" value="GLYCEROL-3-PHOSPHATE DEHYDROGENASE"/>
    <property type="match status" value="1"/>
</dbReference>
<dbReference type="PANTHER" id="PTHR11728:SF1">
    <property type="entry name" value="GLYCEROL-3-PHOSPHATE DEHYDROGENASE [NAD(+)] 2, CHLOROPLASTIC"/>
    <property type="match status" value="1"/>
</dbReference>
<dbReference type="Pfam" id="PF07479">
    <property type="entry name" value="NAD_Gly3P_dh_C"/>
    <property type="match status" value="1"/>
</dbReference>
<dbReference type="Pfam" id="PF01210">
    <property type="entry name" value="NAD_Gly3P_dh_N"/>
    <property type="match status" value="1"/>
</dbReference>
<dbReference type="PIRSF" id="PIRSF000114">
    <property type="entry name" value="Glycerol-3-P_dh"/>
    <property type="match status" value="1"/>
</dbReference>
<dbReference type="PRINTS" id="PR00077">
    <property type="entry name" value="GPDHDRGNASE"/>
</dbReference>
<dbReference type="SUPFAM" id="SSF48179">
    <property type="entry name" value="6-phosphogluconate dehydrogenase C-terminal domain-like"/>
    <property type="match status" value="1"/>
</dbReference>
<dbReference type="SUPFAM" id="SSF51735">
    <property type="entry name" value="NAD(P)-binding Rossmann-fold domains"/>
    <property type="match status" value="1"/>
</dbReference>
<dbReference type="PROSITE" id="PS00957">
    <property type="entry name" value="NAD_G3PDH"/>
    <property type="match status" value="1"/>
</dbReference>
<organism>
    <name type="scientific">Brachyspira hyodysenteriae (strain ATCC 49526 / WA1)</name>
    <dbReference type="NCBI Taxonomy" id="565034"/>
    <lineage>
        <taxon>Bacteria</taxon>
        <taxon>Pseudomonadati</taxon>
        <taxon>Spirochaetota</taxon>
        <taxon>Spirochaetia</taxon>
        <taxon>Brachyspirales</taxon>
        <taxon>Brachyspiraceae</taxon>
        <taxon>Brachyspira</taxon>
    </lineage>
</organism>
<gene>
    <name evidence="1" type="primary">gpsA</name>
    <name type="ordered locus">BHWA1_00500</name>
</gene>
<evidence type="ECO:0000255" key="1">
    <source>
        <dbReference type="HAMAP-Rule" id="MF_00394"/>
    </source>
</evidence>
<sequence>MINVGIIGAGGWGLALANIFSEKHNVKVWVHSESSYKLLSTSYRNDNYLENIQLNKSIKFTTDVGEAVNDSEIVIIVTPSFAFADACINIEPYISNDQILVSATKGLDRKTGKTMSEVARSIISGDLSILTLSGPSHAEEAAKGVPTAVVVGGEKGVSEYVRDTLTVPPKFRIYNSTDQKGVEIGGALKNIIAIAGGIVDGLKLGDNTKAALITRGLHEIVRFALSKGARIDTMYGLSGIGDLIVTCSSGLSRNNRLGRELAKGKKYQDVIAENHGQVAEGVYATTAAYEYAQKNNIYMPITEAIYNILFNDANIQDTLTELMSKDAKSEGFF</sequence>
<feature type="chain" id="PRO_1000190123" description="Glycerol-3-phosphate dehydrogenase [NAD(P)+]">
    <location>
        <begin position="1"/>
        <end position="333"/>
    </location>
</feature>
<feature type="active site" description="Proton acceptor" evidence="1">
    <location>
        <position position="189"/>
    </location>
</feature>
<feature type="binding site" evidence="1">
    <location>
        <position position="12"/>
    </location>
    <ligand>
        <name>NADPH</name>
        <dbReference type="ChEBI" id="CHEBI:57783"/>
    </ligand>
</feature>
<feature type="binding site" evidence="1">
    <location>
        <position position="31"/>
    </location>
    <ligand>
        <name>NADPH</name>
        <dbReference type="ChEBI" id="CHEBI:57783"/>
    </ligand>
</feature>
<feature type="binding site" evidence="1">
    <location>
        <position position="105"/>
    </location>
    <ligand>
        <name>NADPH</name>
        <dbReference type="ChEBI" id="CHEBI:57783"/>
    </ligand>
</feature>
<feature type="binding site" evidence="1">
    <location>
        <position position="105"/>
    </location>
    <ligand>
        <name>sn-glycerol 3-phosphate</name>
        <dbReference type="ChEBI" id="CHEBI:57597"/>
    </ligand>
</feature>
<feature type="binding site" evidence="1">
    <location>
        <position position="134"/>
    </location>
    <ligand>
        <name>sn-glycerol 3-phosphate</name>
        <dbReference type="ChEBI" id="CHEBI:57597"/>
    </ligand>
</feature>
<feature type="binding site" evidence="1">
    <location>
        <position position="136"/>
    </location>
    <ligand>
        <name>sn-glycerol 3-phosphate</name>
        <dbReference type="ChEBI" id="CHEBI:57597"/>
    </ligand>
</feature>
<feature type="binding site" evidence="1">
    <location>
        <position position="138"/>
    </location>
    <ligand>
        <name>NADPH</name>
        <dbReference type="ChEBI" id="CHEBI:57783"/>
    </ligand>
</feature>
<feature type="binding site" evidence="1">
    <location>
        <position position="189"/>
    </location>
    <ligand>
        <name>sn-glycerol 3-phosphate</name>
        <dbReference type="ChEBI" id="CHEBI:57597"/>
    </ligand>
</feature>
<feature type="binding site" evidence="1">
    <location>
        <position position="242"/>
    </location>
    <ligand>
        <name>sn-glycerol 3-phosphate</name>
        <dbReference type="ChEBI" id="CHEBI:57597"/>
    </ligand>
</feature>
<feature type="binding site" evidence="1">
    <location>
        <position position="252"/>
    </location>
    <ligand>
        <name>sn-glycerol 3-phosphate</name>
        <dbReference type="ChEBI" id="CHEBI:57597"/>
    </ligand>
</feature>
<feature type="binding site" evidence="1">
    <location>
        <position position="253"/>
    </location>
    <ligand>
        <name>NADPH</name>
        <dbReference type="ChEBI" id="CHEBI:57783"/>
    </ligand>
</feature>
<feature type="binding site" evidence="1">
    <location>
        <position position="253"/>
    </location>
    <ligand>
        <name>sn-glycerol 3-phosphate</name>
        <dbReference type="ChEBI" id="CHEBI:57597"/>
    </ligand>
</feature>
<feature type="binding site" evidence="1">
    <location>
        <position position="254"/>
    </location>
    <ligand>
        <name>sn-glycerol 3-phosphate</name>
        <dbReference type="ChEBI" id="CHEBI:57597"/>
    </ligand>
</feature>
<feature type="binding site" evidence="1">
    <location>
        <position position="278"/>
    </location>
    <ligand>
        <name>NADPH</name>
        <dbReference type="ChEBI" id="CHEBI:57783"/>
    </ligand>
</feature>
<feature type="binding site" evidence="1">
    <location>
        <position position="280"/>
    </location>
    <ligand>
        <name>NADPH</name>
        <dbReference type="ChEBI" id="CHEBI:57783"/>
    </ligand>
</feature>
<accession>C0QYQ8</accession>